<evidence type="ECO:0000255" key="1">
    <source>
        <dbReference type="PROSITE-ProRule" id="PRU00108"/>
    </source>
</evidence>
<evidence type="ECO:0000256" key="2">
    <source>
        <dbReference type="SAM" id="MobiDB-lite"/>
    </source>
</evidence>
<evidence type="ECO:0000305" key="3"/>
<feature type="chain" id="PRO_0000196083" description="Homeobox protein E30">
    <location>
        <begin position="1" status="less than"/>
        <end position="109" status="greater than"/>
    </location>
</feature>
<feature type="DNA-binding region" description="Homeobox" evidence="1">
    <location>
        <begin position="20"/>
        <end position="79"/>
    </location>
</feature>
<feature type="region of interest" description="Disordered" evidence="2">
    <location>
        <begin position="1"/>
        <end position="27"/>
    </location>
</feature>
<feature type="compositionally biased region" description="Basic residues" evidence="2">
    <location>
        <begin position="1"/>
        <end position="12"/>
    </location>
</feature>
<feature type="non-terminal residue">
    <location>
        <position position="1"/>
    </location>
</feature>
<feature type="non-terminal residue">
    <location>
        <position position="109"/>
    </location>
</feature>
<reference key="1">
    <citation type="journal article" date="1989" name="Proc. Natl. Acad. Sci. U.S.A.">
        <title>Comparison of homeobox-containing genes of the honeybee and Drosophila.</title>
        <authorList>
            <person name="Walldorf U."/>
            <person name="Fleig R."/>
            <person name="Gehring W.J."/>
        </authorList>
    </citation>
    <scope>NUCLEOTIDE SEQUENCE [GENOMIC DNA]</scope>
</reference>
<sequence>GPRTRRVKRSHNGKNGSPEEKRPRTAFSAEQLARLKREFAENRYLTERRRQQLSRDLGLTEAQIKIWFQNKRAKIKKASGQKNPLALQLMAQGLYNHSTVPVDEDGEEI</sequence>
<accession>P09076</accession>
<proteinExistence type="inferred from homology"/>
<organism>
    <name type="scientific">Apis mellifera</name>
    <name type="common">Honeybee</name>
    <dbReference type="NCBI Taxonomy" id="7460"/>
    <lineage>
        <taxon>Eukaryota</taxon>
        <taxon>Metazoa</taxon>
        <taxon>Ecdysozoa</taxon>
        <taxon>Arthropoda</taxon>
        <taxon>Hexapoda</taxon>
        <taxon>Insecta</taxon>
        <taxon>Pterygota</taxon>
        <taxon>Neoptera</taxon>
        <taxon>Endopterygota</taxon>
        <taxon>Hymenoptera</taxon>
        <taxon>Apocrita</taxon>
        <taxon>Aculeata</taxon>
        <taxon>Apoidea</taxon>
        <taxon>Anthophila</taxon>
        <taxon>Apidae</taxon>
        <taxon>Apis</taxon>
    </lineage>
</organism>
<comment type="subcellular location">
    <subcellularLocation>
        <location>Nucleus</location>
    </subcellularLocation>
</comment>
<comment type="similarity">
    <text evidence="3">Belongs to the engrailed homeobox family.</text>
</comment>
<name>HME30_APIME</name>
<keyword id="KW-0217">Developmental protein</keyword>
<keyword id="KW-0238">DNA-binding</keyword>
<keyword id="KW-0371">Homeobox</keyword>
<keyword id="KW-0539">Nucleus</keyword>
<keyword id="KW-1185">Reference proteome</keyword>
<dbReference type="EMBL" id="M29490">
    <property type="protein sequence ID" value="AAA27725.1"/>
    <property type="molecule type" value="Genomic_DNA"/>
</dbReference>
<dbReference type="PIR" id="E34510">
    <property type="entry name" value="E34510"/>
</dbReference>
<dbReference type="SMR" id="P09076"/>
<dbReference type="PaxDb" id="7460-GB55322-PA"/>
<dbReference type="eggNOG" id="KOG0493">
    <property type="taxonomic scope" value="Eukaryota"/>
</dbReference>
<dbReference type="InParanoid" id="P09076"/>
<dbReference type="Proteomes" id="UP000005203">
    <property type="component" value="Unplaced"/>
</dbReference>
<dbReference type="GO" id="GO:0005634">
    <property type="term" value="C:nucleus"/>
    <property type="evidence" value="ECO:0007669"/>
    <property type="project" value="UniProtKB-SubCell"/>
</dbReference>
<dbReference type="GO" id="GO:0000981">
    <property type="term" value="F:DNA-binding transcription factor activity, RNA polymerase II-specific"/>
    <property type="evidence" value="ECO:0007669"/>
    <property type="project" value="InterPro"/>
</dbReference>
<dbReference type="GO" id="GO:0000978">
    <property type="term" value="F:RNA polymerase II cis-regulatory region sequence-specific DNA binding"/>
    <property type="evidence" value="ECO:0007669"/>
    <property type="project" value="TreeGrafter"/>
</dbReference>
<dbReference type="GO" id="GO:0030182">
    <property type="term" value="P:neuron differentiation"/>
    <property type="evidence" value="ECO:0007669"/>
    <property type="project" value="TreeGrafter"/>
</dbReference>
<dbReference type="CDD" id="cd00086">
    <property type="entry name" value="homeodomain"/>
    <property type="match status" value="1"/>
</dbReference>
<dbReference type="FunFam" id="1.10.10.60:FF:000345">
    <property type="entry name" value="Homeobox protein engrailed-like"/>
    <property type="match status" value="1"/>
</dbReference>
<dbReference type="Gene3D" id="1.10.10.60">
    <property type="entry name" value="Homeodomain-like"/>
    <property type="match status" value="1"/>
</dbReference>
<dbReference type="InterPro" id="IPR050720">
    <property type="entry name" value="Engrailed_Homeobox_TFs"/>
</dbReference>
<dbReference type="InterPro" id="IPR001356">
    <property type="entry name" value="HD"/>
</dbReference>
<dbReference type="InterPro" id="IPR000747">
    <property type="entry name" value="HD_engrailed"/>
</dbReference>
<dbReference type="InterPro" id="IPR020479">
    <property type="entry name" value="HD_metazoa"/>
</dbReference>
<dbReference type="InterPro" id="IPR019549">
    <property type="entry name" value="Homeobox-engrailed_C-terminal"/>
</dbReference>
<dbReference type="InterPro" id="IPR019737">
    <property type="entry name" value="Homeobox-engrailed_CS"/>
</dbReference>
<dbReference type="InterPro" id="IPR017970">
    <property type="entry name" value="Homeobox_CS"/>
</dbReference>
<dbReference type="InterPro" id="IPR009057">
    <property type="entry name" value="Homeodomain-like_sf"/>
</dbReference>
<dbReference type="InterPro" id="IPR000047">
    <property type="entry name" value="HTH_motif"/>
</dbReference>
<dbReference type="PANTHER" id="PTHR24341">
    <property type="entry name" value="HOMEOBOX PROTEIN ENGRAILED"/>
    <property type="match status" value="1"/>
</dbReference>
<dbReference type="PANTHER" id="PTHR24341:SF6">
    <property type="entry name" value="HOMEOBOX PROTEIN INVECTED"/>
    <property type="match status" value="1"/>
</dbReference>
<dbReference type="Pfam" id="PF10525">
    <property type="entry name" value="Engrail_1_C_sig"/>
    <property type="match status" value="1"/>
</dbReference>
<dbReference type="Pfam" id="PF00046">
    <property type="entry name" value="Homeodomain"/>
    <property type="match status" value="1"/>
</dbReference>
<dbReference type="PRINTS" id="PR00026">
    <property type="entry name" value="ENGRAILED"/>
</dbReference>
<dbReference type="PRINTS" id="PR00024">
    <property type="entry name" value="HOMEOBOX"/>
</dbReference>
<dbReference type="PRINTS" id="PR00031">
    <property type="entry name" value="HTHREPRESSR"/>
</dbReference>
<dbReference type="SMART" id="SM00389">
    <property type="entry name" value="HOX"/>
    <property type="match status" value="1"/>
</dbReference>
<dbReference type="SUPFAM" id="SSF46689">
    <property type="entry name" value="Homeodomain-like"/>
    <property type="match status" value="1"/>
</dbReference>
<dbReference type="PROSITE" id="PS00033">
    <property type="entry name" value="ENGRAILED"/>
    <property type="match status" value="1"/>
</dbReference>
<dbReference type="PROSITE" id="PS00027">
    <property type="entry name" value="HOMEOBOX_1"/>
    <property type="match status" value="1"/>
</dbReference>
<dbReference type="PROSITE" id="PS50071">
    <property type="entry name" value="HOMEOBOX_2"/>
    <property type="match status" value="1"/>
</dbReference>
<protein>
    <recommendedName>
        <fullName>Homeobox protein E30</fullName>
    </recommendedName>
</protein>